<reference key="1">
    <citation type="journal article" date="1986" name="J. Gen. Microbiol.">
        <title>Cloning and sequencing of a gene from Bacillus amyloliquefaciens that complements mutations of the sporulation gene spoIID in Bacillus subtilis.</title>
        <authorList>
            <person name="Turner S.M."/>
            <person name="Mandelstam J."/>
        </authorList>
    </citation>
    <scope>NUCLEOTIDE SEQUENCE [GENOMIC DNA]</scope>
</reference>
<comment type="function">
    <text>May act at the level of sigma-G activity or its stability. SpoIID is probably required for engulfment.</text>
</comment>
<sequence length="344" mass="37900">MKPIVFLLSGLCVLILLVPTILVLPFQAEKGAAVNREPGHKTAHTIRETKGAEPTLKESPVSVPVYRTSNHSVENIPLEEYVIGVVASEMPVEFKPEALKAQALAARTFIVRLMVANSASRPRKGSLVDDTQMFQVYKSKSQLKKEWGSDYAQNLKKITNAVAGTQGKILTYENKPIEASFFSTSNGYTENAEAYWTSAIPYLKSVKSPWDKKSPKYLATRTFSVPEFQQKLGVQLAGQDTVGQITARTPGHQVATAVINGKKLKGRDIREKLGLRSADFEWKRNGGTITITTKGFGHGVGMSQYGANYMAEQGKSVTDIVKHYYQGVDISEADSFLSKYMAKK</sequence>
<name>SP2D_BACAM</name>
<protein>
    <recommendedName>
        <fullName>Stage II sporulation protein D</fullName>
    </recommendedName>
</protein>
<evidence type="ECO:0000256" key="1">
    <source>
        <dbReference type="SAM" id="MobiDB-lite"/>
    </source>
</evidence>
<dbReference type="EMBL" id="M20331">
    <property type="protein sequence ID" value="AAA22792.1"/>
    <property type="molecule type" value="Genomic_DNA"/>
</dbReference>
<dbReference type="PIR" id="A27875">
    <property type="entry name" value="SZBS2N"/>
</dbReference>
<dbReference type="SMR" id="P13251"/>
<dbReference type="STRING" id="692420.BAMF_3512"/>
<dbReference type="eggNOG" id="COG2385">
    <property type="taxonomic scope" value="Bacteria"/>
</dbReference>
<dbReference type="GO" id="GO:0030288">
    <property type="term" value="C:outer membrane-bounded periplasmic space"/>
    <property type="evidence" value="ECO:0007669"/>
    <property type="project" value="TreeGrafter"/>
</dbReference>
<dbReference type="GO" id="GO:0030435">
    <property type="term" value="P:sporulation resulting in formation of a cellular spore"/>
    <property type="evidence" value="ECO:0007669"/>
    <property type="project" value="UniProtKB-KW"/>
</dbReference>
<dbReference type="InterPro" id="IPR051922">
    <property type="entry name" value="Bact_Sporulation_Assoc"/>
</dbReference>
<dbReference type="InterPro" id="IPR013486">
    <property type="entry name" value="SpoIID/LytB"/>
</dbReference>
<dbReference type="InterPro" id="IPR013693">
    <property type="entry name" value="SpoIID/LytB_N"/>
</dbReference>
<dbReference type="InterPro" id="IPR014225">
    <property type="entry name" value="Spore_II_D_firmicutes"/>
</dbReference>
<dbReference type="NCBIfam" id="TIGR02669">
    <property type="entry name" value="SpoIID_LytB"/>
    <property type="match status" value="1"/>
</dbReference>
<dbReference type="NCBIfam" id="TIGR02870">
    <property type="entry name" value="spore_II_D"/>
    <property type="match status" value="1"/>
</dbReference>
<dbReference type="PANTHER" id="PTHR30032:SF4">
    <property type="entry name" value="AMIDASE ENHANCER"/>
    <property type="match status" value="1"/>
</dbReference>
<dbReference type="PANTHER" id="PTHR30032">
    <property type="entry name" value="N-ACETYLMURAMOYL-L-ALANINE AMIDASE-RELATED"/>
    <property type="match status" value="1"/>
</dbReference>
<dbReference type="Pfam" id="PF08486">
    <property type="entry name" value="SpoIID"/>
    <property type="match status" value="1"/>
</dbReference>
<organism>
    <name type="scientific">Bacillus amyloliquefaciens</name>
    <name type="common">Bacillus velezensis</name>
    <dbReference type="NCBI Taxonomy" id="1390"/>
    <lineage>
        <taxon>Bacteria</taxon>
        <taxon>Bacillati</taxon>
        <taxon>Bacillota</taxon>
        <taxon>Bacilli</taxon>
        <taxon>Bacillales</taxon>
        <taxon>Bacillaceae</taxon>
        <taxon>Bacillus</taxon>
        <taxon>Bacillus amyloliquefaciens group</taxon>
    </lineage>
</organism>
<keyword id="KW-0749">Sporulation</keyword>
<feature type="chain" id="PRO_0000072057" description="Stage II sporulation protein D">
    <location>
        <begin position="1"/>
        <end position="344"/>
    </location>
</feature>
<feature type="region of interest" description="Disordered" evidence="1">
    <location>
        <begin position="35"/>
        <end position="59"/>
    </location>
</feature>
<feature type="compositionally biased region" description="Basic and acidic residues" evidence="1">
    <location>
        <begin position="37"/>
        <end position="51"/>
    </location>
</feature>
<accession>P13251</accession>
<gene>
    <name type="primary">spoIID</name>
</gene>
<proteinExistence type="predicted"/>